<organism>
    <name type="scientific">Aspergillus ruber (strain CBS 135680)</name>
    <dbReference type="NCBI Taxonomy" id="1388766"/>
    <lineage>
        <taxon>Eukaryota</taxon>
        <taxon>Fungi</taxon>
        <taxon>Dikarya</taxon>
        <taxon>Ascomycota</taxon>
        <taxon>Pezizomycotina</taxon>
        <taxon>Eurotiomycetes</taxon>
        <taxon>Eurotiomycetidae</taxon>
        <taxon>Eurotiales</taxon>
        <taxon>Aspergillaceae</taxon>
        <taxon>Aspergillus</taxon>
        <taxon>Aspergillus subgen. Aspergillus</taxon>
    </lineage>
</organism>
<keyword id="KW-0521">NADP</keyword>
<keyword id="KW-0560">Oxidoreductase</keyword>
<keyword id="KW-1185">Reference proteome</keyword>
<feature type="chain" id="PRO_0000456593" description="Short-chain dehydrogenase fogG">
    <location>
        <begin position="1"/>
        <end position="348"/>
    </location>
</feature>
<feature type="active site" description="Proton donor" evidence="2">
    <location>
        <position position="180"/>
    </location>
</feature>
<feature type="active site" description="Proton donor" evidence="2">
    <location>
        <position position="215"/>
    </location>
</feature>
<feature type="active site" description="Lowers pKa of active site Tyr" evidence="2">
    <location>
        <position position="219"/>
    </location>
</feature>
<feature type="binding site" evidence="1">
    <location>
        <position position="51"/>
    </location>
    <ligand>
        <name>NADP(+)</name>
        <dbReference type="ChEBI" id="CHEBI:58349"/>
    </ligand>
</feature>
<feature type="binding site" evidence="1">
    <location>
        <position position="75"/>
    </location>
    <ligand>
        <name>NADP(+)</name>
        <dbReference type="ChEBI" id="CHEBI:58349"/>
    </ligand>
</feature>
<feature type="binding site" evidence="1">
    <location>
        <position position="100"/>
    </location>
    <ligand>
        <name>NADP(+)</name>
        <dbReference type="ChEBI" id="CHEBI:58349"/>
    </ligand>
</feature>
<feature type="binding site" evidence="2">
    <location>
        <position position="126"/>
    </location>
    <ligand>
        <name>NADP(+)</name>
        <dbReference type="ChEBI" id="CHEBI:58349"/>
    </ligand>
</feature>
<feature type="binding site" evidence="2">
    <location>
        <position position="215"/>
    </location>
    <ligand>
        <name>NADP(+)</name>
        <dbReference type="ChEBI" id="CHEBI:58349"/>
    </ligand>
</feature>
<feature type="binding site" evidence="2">
    <location>
        <position position="219"/>
    </location>
    <ligand>
        <name>NADP(+)</name>
        <dbReference type="ChEBI" id="CHEBI:58349"/>
    </ligand>
</feature>
<dbReference type="EC" id="1.1.1.-" evidence="3"/>
<dbReference type="EMBL" id="KK088422">
    <property type="protein sequence ID" value="EYE95341.1"/>
    <property type="molecule type" value="Genomic_DNA"/>
</dbReference>
<dbReference type="SMR" id="A0A017SEY2"/>
<dbReference type="STRING" id="1388766.A0A017SEY2"/>
<dbReference type="HOGENOM" id="CLU_010194_44_4_1"/>
<dbReference type="OrthoDB" id="191139at2759"/>
<dbReference type="Proteomes" id="UP000019804">
    <property type="component" value="Unassembled WGS sequence"/>
</dbReference>
<dbReference type="GO" id="GO:0016491">
    <property type="term" value="F:oxidoreductase activity"/>
    <property type="evidence" value="ECO:0007669"/>
    <property type="project" value="UniProtKB-KW"/>
</dbReference>
<dbReference type="Gene3D" id="3.40.50.720">
    <property type="entry name" value="NAD(P)-binding Rossmann-like Domain"/>
    <property type="match status" value="1"/>
</dbReference>
<dbReference type="InterPro" id="IPR036291">
    <property type="entry name" value="NAD(P)-bd_dom_sf"/>
</dbReference>
<dbReference type="InterPro" id="IPR002347">
    <property type="entry name" value="SDR_fam"/>
</dbReference>
<dbReference type="PANTHER" id="PTHR43157:SF31">
    <property type="entry name" value="PHOSPHATIDYLINOSITOL-GLYCAN BIOSYNTHESIS CLASS F PROTEIN"/>
    <property type="match status" value="1"/>
</dbReference>
<dbReference type="PANTHER" id="PTHR43157">
    <property type="entry name" value="PHOSPHATIDYLINOSITOL-GLYCAN BIOSYNTHESIS CLASS F PROTEIN-RELATED"/>
    <property type="match status" value="1"/>
</dbReference>
<dbReference type="Pfam" id="PF00106">
    <property type="entry name" value="adh_short"/>
    <property type="match status" value="1"/>
</dbReference>
<dbReference type="PRINTS" id="PR00081">
    <property type="entry name" value="GDHRDH"/>
</dbReference>
<dbReference type="SUPFAM" id="SSF51735">
    <property type="entry name" value="NAD(P)-binding Rossmann-fold domains"/>
    <property type="match status" value="1"/>
</dbReference>
<gene>
    <name evidence="4" type="primary">fogG</name>
    <name type="ORF">EURHEDRAFT_515220</name>
</gene>
<name>FOGG_ASPRC</name>
<evidence type="ECO:0000250" key="1">
    <source>
        <dbReference type="UniProtKB" id="L0E2Z4"/>
    </source>
</evidence>
<evidence type="ECO:0000250" key="2">
    <source>
        <dbReference type="UniProtKB" id="O93868"/>
    </source>
</evidence>
<evidence type="ECO:0000269" key="3">
    <source>
    </source>
</evidence>
<evidence type="ECO:0000303" key="4">
    <source>
    </source>
</evidence>
<evidence type="ECO:0000305" key="5"/>
<sequence>MAVTFDISPEKEAGVLRLFHSQLFVTPPPLTRRDVDLSGKTAIVTGANGGLGLETAHQLLDLGCKVILAVRRVERGEAARQKLLEGRDAQATEIEVWPLDLSSYESVVGFAERAKTLSRLDIAILNAGLYKVNQTMTASTGYEESIHVNYLANALLITLLAPIFKNKKTGNTPGRIVLVSSDLAAWAKFKERKSNPILPTFKQKMTPKWDYLERYGTSKVLGQFFVTELAKRVSPDAVLVTTTNCGLCHGSELSREGQGHLIGYVFNVVSRLFGRSCSVGARVFVHAAANPVLGASVHGQYVEDAKLKPMSPLIYKPGDLQLGSKLWEETMDELSFAGAREIIDSLTK</sequence>
<protein>
    <recommendedName>
        <fullName evidence="4">Short-chain dehydrogenase fogG</fullName>
        <ecNumber evidence="3">1.1.1.-</ecNumber>
    </recommendedName>
    <alternativeName>
        <fullName evidence="4">Flavoglaucin biosynthesis cluster protein G</fullName>
    </alternativeName>
</protein>
<proteinExistence type="evidence at protein level"/>
<accession>A0A017SEY2</accession>
<reference key="1">
    <citation type="journal article" date="2014" name="Nat. Commun.">
        <title>Genomic adaptations of the halophilic Dead Sea filamentous fungus Eurotium rubrum.</title>
        <authorList>
            <person name="Kis-Papo T."/>
            <person name="Weig A.R."/>
            <person name="Riley R."/>
            <person name="Persoh D."/>
            <person name="Salamov A."/>
            <person name="Sun H."/>
            <person name="Lipzen A."/>
            <person name="Wasser S.P."/>
            <person name="Rambold G."/>
            <person name="Grigoriev I.V."/>
            <person name="Nevo E."/>
        </authorList>
    </citation>
    <scope>NUCLEOTIDE SEQUENCE [LARGE SCALE GENOMIC DNA]</scope>
    <source>
        <strain>CBS 135680</strain>
    </source>
</reference>
<reference key="2">
    <citation type="journal article" date="2020" name="Org. Lett.">
        <title>Biosynthesis of the prenylated salicylaldehyde flavoglaucin requires temporary reduction to salicyl alcohol for decoration before reoxidation to the final product.</title>
        <authorList>
            <person name="Nies J."/>
            <person name="Ran H."/>
            <person name="Wohlgemuth V."/>
            <person name="Yin W.B."/>
            <person name="Li S.M."/>
        </authorList>
    </citation>
    <scope>FUNCTION</scope>
    <scope>DISRUPTION PHENOTYPE</scope>
    <scope>CATALYTIC ACTIVITY</scope>
    <scope>PATHWAY</scope>
</reference>
<comment type="function">
    <text evidence="3">Short-chain dehydrogenase; part of the gene cluster that mediates the biosynthesis of flavoglaucin and congeners (including aspergin, dihydroauroglaucin and auroglaucin), prenylated salicylaldehyde derivatives carrying a saturated or an unsaturated C-7 side chain (PubMed:32134669). The PKS fogA releases the carboxylic acid (8E,10E,12E)-3,5,7-trihydroxytetradeca-8,10,12-trienoic acid as its product, as well as derivatives with one and two double bonds (PubMed:32134669). FogA is indeed able to reduce the initial triketide, thus being at least partially responsible for the differently saturated heptyl side chains of flavoglaucin congeners (PubMed:32134669). The oxidoreductases fogB, fogC and fogD modify the nascent polyketide in fogA-bound form and, together, fogA, fogB, fogC and fogD are necessary for the formation of the aromatic core and the cyclized PKS products are released as salicyl alcohols (PubMed:32134669). In particular, fogB is responsible for oxidation of a hydroxyl group or reduction of remaining double bond(s) at the C-7 residue whereas fogD is probably involved in the reductive release of the modified PKS products (PubMed:32134669). The cytochrome P450 monooxygenase fogE is then responsible for the hydroxylation at C-3 of the benzene ring (PubMed:32134669). The fogE products are substrates of the prenyltransferase fogH and the prenylated benzyl alcohols are subsequently oxidized by the fogF to produce the final aryl aldehydes flavoglaucin and congeners (PubMed:32134669). The short-chain dehydrogenase fogG does not seem to be involved in the biosynthesis of the prenylated salicylaldehyde derivatives (PubMed:32134669).</text>
</comment>
<comment type="pathway">
    <text evidence="3">Secondary metabolite biosynthesis.</text>
</comment>
<comment type="disruption phenotype">
    <text evidence="3">Does not affect the production of flavoglaucin and congeners.</text>
</comment>
<comment type="similarity">
    <text evidence="5">Belongs to the short-chain dehydrogenases/reductases (SDR) family.</text>
</comment>